<comment type="function">
    <text evidence="1">Modulates arousal and anxiety. May play an important anorexigenic role. Binds to its receptor NPSR1 with nanomolar affinity to increase intracellular calcium concentrations (By similarity).</text>
</comment>
<comment type="subcellular location">
    <subcellularLocation>
        <location>Secreted</location>
    </subcellularLocation>
</comment>
<feature type="signal peptide" evidence="2">
    <location>
        <begin position="1"/>
        <end position="23"/>
    </location>
</feature>
<feature type="propeptide" id="PRO_0000042886">
    <location>
        <begin position="24"/>
        <end position="67"/>
    </location>
</feature>
<feature type="peptide" id="PRO_0000042887" description="Neuropeptide S">
    <location>
        <begin position="70"/>
        <end position="89"/>
    </location>
</feature>
<dbReference type="EMBL" id="DN276816">
    <property type="status" value="NOT_ANNOTATED_CDS"/>
    <property type="molecule type" value="mRNA"/>
</dbReference>
<dbReference type="FunCoup" id="P0C0P5">
    <property type="interactions" value="12"/>
</dbReference>
<dbReference type="STRING" id="9913.ENSBTAP00000057543"/>
<dbReference type="InParanoid" id="P0C0P5"/>
<dbReference type="Proteomes" id="UP000009136">
    <property type="component" value="Unplaced"/>
</dbReference>
<dbReference type="GO" id="GO:0005576">
    <property type="term" value="C:extracellular region"/>
    <property type="evidence" value="ECO:0007669"/>
    <property type="project" value="UniProtKB-SubCell"/>
</dbReference>
<dbReference type="GO" id="GO:0007218">
    <property type="term" value="P:neuropeptide signaling pathway"/>
    <property type="evidence" value="ECO:0007669"/>
    <property type="project" value="UniProtKB-KW"/>
</dbReference>
<dbReference type="GO" id="GO:0045760">
    <property type="term" value="P:positive regulation of action potential"/>
    <property type="evidence" value="ECO:0000318"/>
    <property type="project" value="GO_Central"/>
</dbReference>
<dbReference type="GO" id="GO:0032230">
    <property type="term" value="P:positive regulation of synaptic transmission, GABAergic"/>
    <property type="evidence" value="ECO:0000318"/>
    <property type="project" value="GO_Central"/>
</dbReference>
<dbReference type="GO" id="GO:0051968">
    <property type="term" value="P:positive regulation of synaptic transmission, glutamatergic"/>
    <property type="evidence" value="ECO:0000318"/>
    <property type="project" value="GO_Central"/>
</dbReference>
<dbReference type="InterPro" id="IPR028138">
    <property type="entry name" value="Neuropeptide_S"/>
</dbReference>
<dbReference type="PANTHER" id="PTHR36679">
    <property type="entry name" value="NEUROPEPTIDE S"/>
    <property type="match status" value="1"/>
</dbReference>
<dbReference type="PANTHER" id="PTHR36679:SF1">
    <property type="entry name" value="NEUROPEPTIDE S"/>
    <property type="match status" value="1"/>
</dbReference>
<dbReference type="Pfam" id="PF14993">
    <property type="entry name" value="Neuropeptide_S"/>
    <property type="match status" value="1"/>
</dbReference>
<protein>
    <recommendedName>
        <fullName>Neuropeptide S</fullName>
    </recommendedName>
</protein>
<proteinExistence type="inferred from homology"/>
<gene>
    <name type="primary">NPS</name>
</gene>
<name>NPS_BOVIN</name>
<accession>P0C0P5</accession>
<reference key="1">
    <citation type="submission" date="2005-03" db="EMBL/GenBank/DDBJ databases">
        <title>A second set of bovine ESTs from pooled-tissue normalized libraries.</title>
        <authorList>
            <person name="Smith T.P.L."/>
            <person name="Roberts A.J."/>
            <person name="Echternkamp S.E."/>
            <person name="Chitko-McKown C.G."/>
            <person name="Wray J.E."/>
            <person name="Keele J.W."/>
        </authorList>
    </citation>
    <scope>NUCLEOTIDE SEQUENCE [LARGE SCALE MRNA]</scope>
</reference>
<evidence type="ECO:0000250" key="1"/>
<evidence type="ECO:0000255" key="2"/>
<keyword id="KW-0165">Cleavage on pair of basic residues</keyword>
<keyword id="KW-0527">Neuropeptide</keyword>
<keyword id="KW-1185">Reference proteome</keyword>
<keyword id="KW-0964">Secreted</keyword>
<keyword id="KW-0732">Signal</keyword>
<sequence>MIGSLKFNFILFLLISTMHMFWCHPISSSKVPGKSDYFVILLNSCPTRMDRRVGLDFLKPILEKTLMKRSFRNGVGTGMKKTSFRRAKS</sequence>
<organism>
    <name type="scientific">Bos taurus</name>
    <name type="common">Bovine</name>
    <dbReference type="NCBI Taxonomy" id="9913"/>
    <lineage>
        <taxon>Eukaryota</taxon>
        <taxon>Metazoa</taxon>
        <taxon>Chordata</taxon>
        <taxon>Craniata</taxon>
        <taxon>Vertebrata</taxon>
        <taxon>Euteleostomi</taxon>
        <taxon>Mammalia</taxon>
        <taxon>Eutheria</taxon>
        <taxon>Laurasiatheria</taxon>
        <taxon>Artiodactyla</taxon>
        <taxon>Ruminantia</taxon>
        <taxon>Pecora</taxon>
        <taxon>Bovidae</taxon>
        <taxon>Bovinae</taxon>
        <taxon>Bos</taxon>
    </lineage>
</organism>